<keyword id="KW-0648">Protein biosynthesis</keyword>
<keyword id="KW-0808">Transferase</keyword>
<feature type="chain" id="PRO_0000082931" description="Methionyl-tRNA formyltransferase">
    <location>
        <begin position="1"/>
        <end position="306"/>
    </location>
</feature>
<feature type="binding site" evidence="1">
    <location>
        <begin position="110"/>
        <end position="113"/>
    </location>
    <ligand>
        <name>(6S)-5,6,7,8-tetrahydrofolate</name>
        <dbReference type="ChEBI" id="CHEBI:57453"/>
    </ligand>
</feature>
<protein>
    <recommendedName>
        <fullName evidence="1">Methionyl-tRNA formyltransferase</fullName>
        <ecNumber evidence="1">2.1.2.9</ecNumber>
    </recommendedName>
</protein>
<comment type="function">
    <text evidence="1">Attaches a formyl group to the free amino group of methionyl-tRNA(fMet). The formyl group appears to play a dual role in the initiator identity of N-formylmethionyl-tRNA by promoting its recognition by IF2 and preventing the misappropriation of this tRNA by the elongation apparatus.</text>
</comment>
<comment type="catalytic activity">
    <reaction evidence="1">
        <text>L-methionyl-tRNA(fMet) + (6R)-10-formyltetrahydrofolate = N-formyl-L-methionyl-tRNA(fMet) + (6S)-5,6,7,8-tetrahydrofolate + H(+)</text>
        <dbReference type="Rhea" id="RHEA:24380"/>
        <dbReference type="Rhea" id="RHEA-COMP:9952"/>
        <dbReference type="Rhea" id="RHEA-COMP:9953"/>
        <dbReference type="ChEBI" id="CHEBI:15378"/>
        <dbReference type="ChEBI" id="CHEBI:57453"/>
        <dbReference type="ChEBI" id="CHEBI:78530"/>
        <dbReference type="ChEBI" id="CHEBI:78844"/>
        <dbReference type="ChEBI" id="CHEBI:195366"/>
        <dbReference type="EC" id="2.1.2.9"/>
    </reaction>
</comment>
<comment type="similarity">
    <text evidence="1">Belongs to the Fmt family.</text>
</comment>
<proteinExistence type="inferred from homology"/>
<reference key="1">
    <citation type="journal article" date="2002" name="Proc. Natl. Acad. Sci. U.S.A.">
        <title>The genome sequence of the facultative intracellular pathogen Brucella melitensis.</title>
        <authorList>
            <person name="DelVecchio V.G."/>
            <person name="Kapatral V."/>
            <person name="Redkar R.J."/>
            <person name="Patra G."/>
            <person name="Mujer C."/>
            <person name="Los T."/>
            <person name="Ivanova N."/>
            <person name="Anderson I."/>
            <person name="Bhattacharyya A."/>
            <person name="Lykidis A."/>
            <person name="Reznik G."/>
            <person name="Jablonski L."/>
            <person name="Larsen N."/>
            <person name="D'Souza M."/>
            <person name="Bernal A."/>
            <person name="Mazur M."/>
            <person name="Goltsman E."/>
            <person name="Selkov E."/>
            <person name="Elzer P.H."/>
            <person name="Hagius S."/>
            <person name="O'Callaghan D."/>
            <person name="Letesson J.-J."/>
            <person name="Haselkorn R."/>
            <person name="Kyrpides N.C."/>
            <person name="Overbeek R."/>
        </authorList>
    </citation>
    <scope>NUCLEOTIDE SEQUENCE [LARGE SCALE GENOMIC DNA]</scope>
    <source>
        <strain>ATCC 23456 / CCUG 17765 / NCTC 10094 / 16M</strain>
    </source>
</reference>
<sequence length="306" mass="32772">MRVVFMGTPEFSVPILTAIIGHGYEVVAAYTQPPRPAGRRGLELTRSPVHEKAEQFGIPVFTPKSLKGAEEQDVFASLEADVAIVVAYGLLLPKAILDAPRLGCYNGHASLLPRWRGAAPIQRAIMAGDAETGMMIMKMDEGLDTGPVAMAEKVAITPDMTAGELHDRLSMIGADLMIRALGALERESLALQPQAEEGVTYAAKIDKAEARIDWSKPAKDVHNSIRGLSPFPGAWCEMEINGAVERVKLQRSTLGEGSGAPGTVLDDRLTIACGEGAVRLATLQRSGGKPLPAQEFLRGQRVTKVL</sequence>
<gene>
    <name evidence="1" type="primary">fmt</name>
    <name type="ordered locus">BMEII0265</name>
</gene>
<name>FMT_BRUME</name>
<accession>P64132</accession>
<accession>Q8YDB3</accession>
<dbReference type="EC" id="2.1.2.9" evidence="1"/>
<dbReference type="EMBL" id="AE008918">
    <property type="protein sequence ID" value="AAL53506.1"/>
    <property type="molecule type" value="Genomic_DNA"/>
</dbReference>
<dbReference type="PIR" id="AG3542">
    <property type="entry name" value="AG3542"/>
</dbReference>
<dbReference type="RefSeq" id="WP_004682455.1">
    <property type="nucleotide sequence ID" value="NZ_GG703779.1"/>
</dbReference>
<dbReference type="SMR" id="P64132"/>
<dbReference type="GeneID" id="55592657"/>
<dbReference type="KEGG" id="bme:BMEII0265"/>
<dbReference type="KEGG" id="bmel:DK63_2977"/>
<dbReference type="PATRIC" id="fig|224914.52.peg.3123"/>
<dbReference type="eggNOG" id="COG0223">
    <property type="taxonomic scope" value="Bacteria"/>
</dbReference>
<dbReference type="PhylomeDB" id="P64132"/>
<dbReference type="Proteomes" id="UP000000419">
    <property type="component" value="Chromosome II"/>
</dbReference>
<dbReference type="GO" id="GO:0005829">
    <property type="term" value="C:cytosol"/>
    <property type="evidence" value="ECO:0007669"/>
    <property type="project" value="TreeGrafter"/>
</dbReference>
<dbReference type="GO" id="GO:0004479">
    <property type="term" value="F:methionyl-tRNA formyltransferase activity"/>
    <property type="evidence" value="ECO:0007669"/>
    <property type="project" value="UniProtKB-UniRule"/>
</dbReference>
<dbReference type="CDD" id="cd08646">
    <property type="entry name" value="FMT_core_Met-tRNA-FMT_N"/>
    <property type="match status" value="1"/>
</dbReference>
<dbReference type="CDD" id="cd08704">
    <property type="entry name" value="Met_tRNA_FMT_C"/>
    <property type="match status" value="1"/>
</dbReference>
<dbReference type="FunFam" id="3.40.50.12230:FF:000001">
    <property type="entry name" value="Methionyl-tRNA formyltransferase"/>
    <property type="match status" value="1"/>
</dbReference>
<dbReference type="Gene3D" id="3.10.25.10">
    <property type="entry name" value="Formyl transferase, C-terminal domain"/>
    <property type="match status" value="1"/>
</dbReference>
<dbReference type="Gene3D" id="3.40.50.170">
    <property type="entry name" value="Formyl transferase, N-terminal domain"/>
    <property type="match status" value="1"/>
</dbReference>
<dbReference type="HAMAP" id="MF_00182">
    <property type="entry name" value="Formyl_trans"/>
    <property type="match status" value="1"/>
</dbReference>
<dbReference type="InterPro" id="IPR005794">
    <property type="entry name" value="Fmt"/>
</dbReference>
<dbReference type="InterPro" id="IPR005793">
    <property type="entry name" value="Formyl_trans_C"/>
</dbReference>
<dbReference type="InterPro" id="IPR037022">
    <property type="entry name" value="Formyl_trans_C_sf"/>
</dbReference>
<dbReference type="InterPro" id="IPR002376">
    <property type="entry name" value="Formyl_transf_N"/>
</dbReference>
<dbReference type="InterPro" id="IPR036477">
    <property type="entry name" value="Formyl_transf_N_sf"/>
</dbReference>
<dbReference type="InterPro" id="IPR011034">
    <property type="entry name" value="Formyl_transferase-like_C_sf"/>
</dbReference>
<dbReference type="InterPro" id="IPR001555">
    <property type="entry name" value="GART_AS"/>
</dbReference>
<dbReference type="InterPro" id="IPR044135">
    <property type="entry name" value="Met-tRNA-FMT_C"/>
</dbReference>
<dbReference type="InterPro" id="IPR041711">
    <property type="entry name" value="Met-tRNA-FMT_N"/>
</dbReference>
<dbReference type="NCBIfam" id="TIGR00460">
    <property type="entry name" value="fmt"/>
    <property type="match status" value="1"/>
</dbReference>
<dbReference type="PANTHER" id="PTHR11138">
    <property type="entry name" value="METHIONYL-TRNA FORMYLTRANSFERASE"/>
    <property type="match status" value="1"/>
</dbReference>
<dbReference type="PANTHER" id="PTHR11138:SF5">
    <property type="entry name" value="METHIONYL-TRNA FORMYLTRANSFERASE, MITOCHONDRIAL"/>
    <property type="match status" value="1"/>
</dbReference>
<dbReference type="Pfam" id="PF02911">
    <property type="entry name" value="Formyl_trans_C"/>
    <property type="match status" value="1"/>
</dbReference>
<dbReference type="Pfam" id="PF00551">
    <property type="entry name" value="Formyl_trans_N"/>
    <property type="match status" value="1"/>
</dbReference>
<dbReference type="SUPFAM" id="SSF50486">
    <property type="entry name" value="FMT C-terminal domain-like"/>
    <property type="match status" value="1"/>
</dbReference>
<dbReference type="SUPFAM" id="SSF53328">
    <property type="entry name" value="Formyltransferase"/>
    <property type="match status" value="1"/>
</dbReference>
<dbReference type="PROSITE" id="PS00373">
    <property type="entry name" value="GART"/>
    <property type="match status" value="1"/>
</dbReference>
<evidence type="ECO:0000255" key="1">
    <source>
        <dbReference type="HAMAP-Rule" id="MF_00182"/>
    </source>
</evidence>
<organism>
    <name type="scientific">Brucella melitensis biotype 1 (strain ATCC 23456 / CCUG 17765 / NCTC 10094 / 16M)</name>
    <dbReference type="NCBI Taxonomy" id="224914"/>
    <lineage>
        <taxon>Bacteria</taxon>
        <taxon>Pseudomonadati</taxon>
        <taxon>Pseudomonadota</taxon>
        <taxon>Alphaproteobacteria</taxon>
        <taxon>Hyphomicrobiales</taxon>
        <taxon>Brucellaceae</taxon>
        <taxon>Brucella/Ochrobactrum group</taxon>
        <taxon>Brucella</taxon>
    </lineage>
</organism>